<protein>
    <recommendedName>
        <fullName>U4/U6.U5 small nuclear ribonucleoprotein 27 kDa protein</fullName>
        <shortName>U4/U6.U5 snRNP 27 kDa protein</shortName>
        <shortName>U4/U6.U5-27K</shortName>
    </recommendedName>
    <alternativeName>
        <fullName>U4/U6.U5 tri-snRNP-associated protein 3</fullName>
    </alternativeName>
</protein>
<dbReference type="EMBL" id="BC076105">
    <property type="protein sequence ID" value="AAH76105.1"/>
    <property type="molecule type" value="mRNA"/>
</dbReference>
<dbReference type="RefSeq" id="NP_001002703.1">
    <property type="nucleotide sequence ID" value="NM_001002703.2"/>
</dbReference>
<dbReference type="SMR" id="Q6DH74"/>
<dbReference type="STRING" id="7955.ENSDARP00000051654"/>
<dbReference type="PaxDb" id="7955-ENSDARP00000051654"/>
<dbReference type="Ensembl" id="ENSDART00000051655">
    <property type="protein sequence ID" value="ENSDARP00000051654"/>
    <property type="gene ID" value="ENSDARG00000035625"/>
</dbReference>
<dbReference type="GeneID" id="436976"/>
<dbReference type="KEGG" id="dre:436976"/>
<dbReference type="AGR" id="ZFIN:ZDB-GENE-040718-457"/>
<dbReference type="CTD" id="11017"/>
<dbReference type="ZFIN" id="ZDB-GENE-040718-457">
    <property type="gene designation" value="snrnp27"/>
</dbReference>
<dbReference type="eggNOG" id="KOG3263">
    <property type="taxonomic scope" value="Eukaryota"/>
</dbReference>
<dbReference type="HOGENOM" id="CLU_075596_2_1_1"/>
<dbReference type="InParanoid" id="Q6DH74"/>
<dbReference type="OMA" id="VDSSTMW"/>
<dbReference type="OrthoDB" id="21368at2759"/>
<dbReference type="TreeFam" id="TF314458"/>
<dbReference type="PRO" id="PR:Q6DH74"/>
<dbReference type="Proteomes" id="UP000000437">
    <property type="component" value="Chromosome 5"/>
</dbReference>
<dbReference type="Bgee" id="ENSDARG00000035625">
    <property type="expression patterns" value="Expressed in early embryo and 29 other cell types or tissues"/>
</dbReference>
<dbReference type="GO" id="GO:0005634">
    <property type="term" value="C:nucleus"/>
    <property type="evidence" value="ECO:0007669"/>
    <property type="project" value="UniProtKB-SubCell"/>
</dbReference>
<dbReference type="GO" id="GO:0006397">
    <property type="term" value="P:mRNA processing"/>
    <property type="evidence" value="ECO:0007669"/>
    <property type="project" value="UniProtKB-KW"/>
</dbReference>
<dbReference type="GO" id="GO:0008380">
    <property type="term" value="P:RNA splicing"/>
    <property type="evidence" value="ECO:0007669"/>
    <property type="project" value="UniProtKB-KW"/>
</dbReference>
<dbReference type="InterPro" id="IPR013957">
    <property type="entry name" value="SNRNP27"/>
</dbReference>
<dbReference type="PANTHER" id="PTHR31077">
    <property type="entry name" value="U4/U6.U5 SMALL NUCLEAR RIBONUCLEOPROTEIN 27 KDA PROTEIN"/>
    <property type="match status" value="1"/>
</dbReference>
<dbReference type="PANTHER" id="PTHR31077:SF1">
    <property type="entry name" value="U4_U6.U5 SMALL NUCLEAR RIBONUCLEOPROTEIN 27 KDA PROTEIN"/>
    <property type="match status" value="1"/>
</dbReference>
<dbReference type="Pfam" id="PF08648">
    <property type="entry name" value="SNRNP27"/>
    <property type="match status" value="1"/>
</dbReference>
<keyword id="KW-0507">mRNA processing</keyword>
<keyword id="KW-0508">mRNA splicing</keyword>
<keyword id="KW-0539">Nucleus</keyword>
<keyword id="KW-1185">Reference proteome</keyword>
<sequence>MGRSRSRTPPRRERRRSRSSSRDRERRRRERERSRSRDRDRRRSRSRSPHRRRSRSPRRHRSSSLSPLRQKDRRDDDRKDVKEKPAKVHQISAEDMQGKTEEEIEMMKLMGFGSFETSKGKKKDGSIKAFAVNVSQKRKYRQYMNRKGGFNRPLDFIA</sequence>
<gene>
    <name type="primary">snrnp27</name>
    <name type="ORF">zgc:92615</name>
</gene>
<comment type="function">
    <text evidence="1">May play a role in mRNA splicing.</text>
</comment>
<comment type="subunit">
    <text evidence="1">Part of a tri-snRNP complex.</text>
</comment>
<comment type="subcellular location">
    <subcellularLocation>
        <location evidence="3">Nucleus</location>
    </subcellularLocation>
</comment>
<comment type="similarity">
    <text evidence="3">Belongs to the SNUT3 family.</text>
</comment>
<accession>Q6DH74</accession>
<feature type="chain" id="PRO_0000223967" description="U4/U6.U5 small nuclear ribonucleoprotein 27 kDa protein">
    <location>
        <begin position="1"/>
        <end position="158"/>
    </location>
</feature>
<feature type="region of interest" description="Disordered" evidence="2">
    <location>
        <begin position="1"/>
        <end position="100"/>
    </location>
</feature>
<feature type="compositionally biased region" description="Basic residues" evidence="2">
    <location>
        <begin position="1"/>
        <end position="30"/>
    </location>
</feature>
<feature type="compositionally biased region" description="Basic and acidic residues" evidence="2">
    <location>
        <begin position="31"/>
        <end position="41"/>
    </location>
</feature>
<feature type="compositionally biased region" description="Basic residues" evidence="2">
    <location>
        <begin position="42"/>
        <end position="62"/>
    </location>
</feature>
<feature type="compositionally biased region" description="Basic and acidic residues" evidence="2">
    <location>
        <begin position="69"/>
        <end position="86"/>
    </location>
</feature>
<proteinExistence type="evidence at transcript level"/>
<name>SNR27_DANRE</name>
<organism>
    <name type="scientific">Danio rerio</name>
    <name type="common">Zebrafish</name>
    <name type="synonym">Brachydanio rerio</name>
    <dbReference type="NCBI Taxonomy" id="7955"/>
    <lineage>
        <taxon>Eukaryota</taxon>
        <taxon>Metazoa</taxon>
        <taxon>Chordata</taxon>
        <taxon>Craniata</taxon>
        <taxon>Vertebrata</taxon>
        <taxon>Euteleostomi</taxon>
        <taxon>Actinopterygii</taxon>
        <taxon>Neopterygii</taxon>
        <taxon>Teleostei</taxon>
        <taxon>Ostariophysi</taxon>
        <taxon>Cypriniformes</taxon>
        <taxon>Danionidae</taxon>
        <taxon>Danioninae</taxon>
        <taxon>Danio</taxon>
    </lineage>
</organism>
<evidence type="ECO:0000250" key="1"/>
<evidence type="ECO:0000256" key="2">
    <source>
        <dbReference type="SAM" id="MobiDB-lite"/>
    </source>
</evidence>
<evidence type="ECO:0000305" key="3"/>
<reference key="1">
    <citation type="submission" date="2004-07" db="EMBL/GenBank/DDBJ databases">
        <authorList>
            <consortium name="NIH - Zebrafish Gene Collection (ZGC) project"/>
        </authorList>
    </citation>
    <scope>NUCLEOTIDE SEQUENCE [LARGE SCALE MRNA]</scope>
    <source>
        <tissue>Brain</tissue>
    </source>
</reference>